<protein>
    <recommendedName>
        <fullName>Interleukin-1 beta</fullName>
        <shortName>IL-1 beta</shortName>
    </recommendedName>
</protein>
<dbReference type="EMBL" id="D42147">
    <property type="protein sequence ID" value="BAA07718.1"/>
    <property type="molecule type" value="mRNA"/>
</dbReference>
<dbReference type="EMBL" id="U92481">
    <property type="protein sequence ID" value="AAC39256.1"/>
    <property type="molecule type" value="mRNA"/>
</dbReference>
<dbReference type="EMBL" id="D42165">
    <property type="protein sequence ID" value="BAA22528.1"/>
    <property type="molecule type" value="mRNA"/>
</dbReference>
<dbReference type="PIR" id="JC5646">
    <property type="entry name" value="JC5646"/>
</dbReference>
<dbReference type="RefSeq" id="NP_001075995.1">
    <property type="nucleotide sequence ID" value="NM_001082526.1"/>
</dbReference>
<dbReference type="RefSeq" id="NP_001304190.1">
    <property type="nucleotide sequence ID" value="NM_001317261.1"/>
</dbReference>
<dbReference type="SMR" id="Q28386"/>
<dbReference type="FunCoup" id="Q28386">
    <property type="interactions" value="734"/>
</dbReference>
<dbReference type="STRING" id="9796.ENSECAP00000053627"/>
<dbReference type="PaxDb" id="9796-ENSECAP00000053627"/>
<dbReference type="GeneID" id="100034237"/>
<dbReference type="GeneID" id="100052414"/>
<dbReference type="KEGG" id="ecb:100034237"/>
<dbReference type="InParanoid" id="Q28386"/>
<dbReference type="OrthoDB" id="9449069at2759"/>
<dbReference type="Proteomes" id="UP000002281">
    <property type="component" value="Unplaced"/>
</dbReference>
<dbReference type="GO" id="GO:0005829">
    <property type="term" value="C:cytosol"/>
    <property type="evidence" value="ECO:0007669"/>
    <property type="project" value="UniProtKB-SubCell"/>
</dbReference>
<dbReference type="GO" id="GO:0005615">
    <property type="term" value="C:extracellular space"/>
    <property type="evidence" value="ECO:0000318"/>
    <property type="project" value="GO_Central"/>
</dbReference>
<dbReference type="GO" id="GO:0005764">
    <property type="term" value="C:lysosome"/>
    <property type="evidence" value="ECO:0007669"/>
    <property type="project" value="UniProtKB-SubCell"/>
</dbReference>
<dbReference type="GO" id="GO:0005125">
    <property type="term" value="F:cytokine activity"/>
    <property type="evidence" value="ECO:0000318"/>
    <property type="project" value="GO_Central"/>
</dbReference>
<dbReference type="GO" id="GO:0005178">
    <property type="term" value="F:integrin binding"/>
    <property type="evidence" value="ECO:0000250"/>
    <property type="project" value="UniProtKB"/>
</dbReference>
<dbReference type="GO" id="GO:0005149">
    <property type="term" value="F:interleukin-1 receptor binding"/>
    <property type="evidence" value="ECO:0007669"/>
    <property type="project" value="InterPro"/>
</dbReference>
<dbReference type="GO" id="GO:0071222">
    <property type="term" value="P:cellular response to lipopolysaccharide"/>
    <property type="evidence" value="ECO:0000318"/>
    <property type="project" value="GO_Central"/>
</dbReference>
<dbReference type="GO" id="GO:0019221">
    <property type="term" value="P:cytokine-mediated signaling pathway"/>
    <property type="evidence" value="ECO:0000318"/>
    <property type="project" value="GO_Central"/>
</dbReference>
<dbReference type="GO" id="GO:0001660">
    <property type="term" value="P:fever generation"/>
    <property type="evidence" value="ECO:0007669"/>
    <property type="project" value="UniProtKB-KW"/>
</dbReference>
<dbReference type="GO" id="GO:0006955">
    <property type="term" value="P:immune response"/>
    <property type="evidence" value="ECO:0000318"/>
    <property type="project" value="GO_Central"/>
</dbReference>
<dbReference type="GO" id="GO:0006954">
    <property type="term" value="P:inflammatory response"/>
    <property type="evidence" value="ECO:0000318"/>
    <property type="project" value="GO_Central"/>
</dbReference>
<dbReference type="GO" id="GO:0043123">
    <property type="term" value="P:positive regulation of canonical NF-kappaB signal transduction"/>
    <property type="evidence" value="ECO:0000318"/>
    <property type="project" value="GO_Central"/>
</dbReference>
<dbReference type="GO" id="GO:0051781">
    <property type="term" value="P:positive regulation of cell division"/>
    <property type="evidence" value="ECO:0007669"/>
    <property type="project" value="UniProtKB-KW"/>
</dbReference>
<dbReference type="GO" id="GO:0033092">
    <property type="term" value="P:positive regulation of immature T cell proliferation in thymus"/>
    <property type="evidence" value="ECO:0000318"/>
    <property type="project" value="GO_Central"/>
</dbReference>
<dbReference type="GO" id="GO:2000556">
    <property type="term" value="P:positive regulation of T-helper 1 cell cytokine production"/>
    <property type="evidence" value="ECO:0000250"/>
    <property type="project" value="UniProtKB"/>
</dbReference>
<dbReference type="GO" id="GO:0032729">
    <property type="term" value="P:positive regulation of type II interferon production"/>
    <property type="evidence" value="ECO:0000250"/>
    <property type="project" value="UniProtKB"/>
</dbReference>
<dbReference type="GO" id="GO:0070372">
    <property type="term" value="P:regulation of ERK1 and ERK2 cascade"/>
    <property type="evidence" value="ECO:0000318"/>
    <property type="project" value="GO_Central"/>
</dbReference>
<dbReference type="GO" id="GO:0010573">
    <property type="term" value="P:vascular endothelial growth factor production"/>
    <property type="evidence" value="ECO:0000250"/>
    <property type="project" value="UniProtKB"/>
</dbReference>
<dbReference type="CDD" id="cd23296">
    <property type="entry name" value="beta-trefoil_IL1B"/>
    <property type="match status" value="1"/>
</dbReference>
<dbReference type="FunFam" id="2.80.10.50:FF:000027">
    <property type="entry name" value="Interleukin-1 beta"/>
    <property type="match status" value="1"/>
</dbReference>
<dbReference type="Gene3D" id="2.80.10.50">
    <property type="match status" value="1"/>
</dbReference>
<dbReference type="InterPro" id="IPR020877">
    <property type="entry name" value="IL-1_CS"/>
</dbReference>
<dbReference type="InterPro" id="IPR000975">
    <property type="entry name" value="IL-1_fam"/>
</dbReference>
<dbReference type="InterPro" id="IPR003502">
    <property type="entry name" value="IL-1_propep"/>
</dbReference>
<dbReference type="InterPro" id="IPR008996">
    <property type="entry name" value="IL1/FGF"/>
</dbReference>
<dbReference type="PANTHER" id="PTHR10078:SF30">
    <property type="entry name" value="INTERLEUKIN-1 BETA"/>
    <property type="match status" value="1"/>
</dbReference>
<dbReference type="PANTHER" id="PTHR10078">
    <property type="entry name" value="INTERLEUKIN-1 FAMILY MEMBER"/>
    <property type="match status" value="1"/>
</dbReference>
<dbReference type="Pfam" id="PF00340">
    <property type="entry name" value="IL1"/>
    <property type="match status" value="1"/>
</dbReference>
<dbReference type="Pfam" id="PF02394">
    <property type="entry name" value="IL1_propep"/>
    <property type="match status" value="1"/>
</dbReference>
<dbReference type="PRINTS" id="PR00262">
    <property type="entry name" value="IL1HBGF"/>
</dbReference>
<dbReference type="PRINTS" id="PR00264">
    <property type="entry name" value="INTERLEUKIN1"/>
</dbReference>
<dbReference type="PRINTS" id="PR01359">
    <property type="entry name" value="INTRLEUKIN1B"/>
</dbReference>
<dbReference type="PRINTS" id="PR01357">
    <property type="entry name" value="INTRLEUKN1AB"/>
</dbReference>
<dbReference type="SMART" id="SM00125">
    <property type="entry name" value="IL1"/>
    <property type="match status" value="1"/>
</dbReference>
<dbReference type="SUPFAM" id="SSF50353">
    <property type="entry name" value="Cytokine"/>
    <property type="match status" value="1"/>
</dbReference>
<dbReference type="PROSITE" id="PS00253">
    <property type="entry name" value="INTERLEUKIN_1"/>
    <property type="match status" value="1"/>
</dbReference>
<accession>Q28386</accession>
<accession>O18995</accession>
<accession>O77744</accession>
<proteinExistence type="evidence at transcript level"/>
<keyword id="KW-0025">Alternative splicing</keyword>
<keyword id="KW-0202">Cytokine</keyword>
<keyword id="KW-0963">Cytoplasm</keyword>
<keyword id="KW-0395">Inflammatory response</keyword>
<keyword id="KW-0458">Lysosome</keyword>
<keyword id="KW-0497">Mitogen</keyword>
<keyword id="KW-0666">Pyrogen</keyword>
<keyword id="KW-1185">Reference proteome</keyword>
<keyword id="KW-0964">Secreted</keyword>
<feature type="propeptide" id="PRO_0000015299" evidence="1">
    <location>
        <begin position="1"/>
        <end position="115"/>
    </location>
</feature>
<feature type="chain" id="PRO_0000015300" description="Interleukin-1 beta">
    <location>
        <begin position="116"/>
        <end position="268"/>
    </location>
</feature>
<feature type="site" description="Important for interaction with integrin" evidence="2">
    <location>
        <position position="170"/>
    </location>
</feature>
<feature type="site" description="Important for interaction with integrin" evidence="2">
    <location>
        <position position="178"/>
    </location>
</feature>
<feature type="site" description="Important for interaction with integrin" evidence="2">
    <location>
        <position position="180"/>
    </location>
</feature>
<feature type="site" description="Important for interaction with integrin" evidence="2">
    <location>
        <position position="189"/>
    </location>
</feature>
<feature type="splice variant" id="VSP_002648" description="In isoform Short." evidence="4">
    <location>
        <begin position="101"/>
        <end position="154"/>
    </location>
</feature>
<feature type="sequence conflict" description="In Ref. 2; AAC39256." evidence="5" ref="2">
    <original>D</original>
    <variation>N</variation>
    <location>
        <position position="45"/>
    </location>
</feature>
<feature type="sequence conflict" description="In Ref. 2; AAC39256." evidence="5" ref="2">
    <original>H</original>
    <variation>Q</variation>
    <location>
        <position position="55"/>
    </location>
</feature>
<feature type="sequence conflict" description="In Ref. 2; AAC39256." evidence="5" ref="2">
    <original>AM</original>
    <variation>VV</variation>
    <location>
        <begin position="64"/>
        <end position="65"/>
    </location>
</feature>
<feature type="sequence conflict" description="In Ref. 2; AAC39256." evidence="5" ref="2">
    <original>V</original>
    <variation>M</variation>
    <location>
        <position position="71"/>
    </location>
</feature>
<feature type="sequence conflict" description="In Ref. 2; AAC39256." evidence="5" ref="2">
    <original>EG</original>
    <variation>DD</variation>
    <location>
        <begin position="110"/>
        <end position="111"/>
    </location>
</feature>
<feature type="sequence conflict" description="In Ref. 2; AAC39256." evidence="5" ref="2">
    <original>M</original>
    <variation>V</variation>
    <location>
        <position position="118"/>
    </location>
</feature>
<feature type="sequence conflict" description="In Ref. 2; AAC39256." evidence="5" ref="2">
    <original>S</original>
    <variation>K</variation>
    <location>
        <position position="245"/>
    </location>
</feature>
<name>IL1B_HORSE</name>
<reference key="1">
    <citation type="journal article" date="1995" name="Vet. Immunol. Immunopathol.">
        <title>Molecular cloning of equine interleukin-1 alpha and -beta cDNAs.</title>
        <authorList>
            <person name="Kato H."/>
            <person name="Ohashi T."/>
            <person name="Nakamura N."/>
            <person name="Nishimura Y."/>
            <person name="Watari T."/>
            <person name="Goitsuka R."/>
            <person name="Tsujimoto H."/>
            <person name="Hasegawa A."/>
        </authorList>
    </citation>
    <scope>NUCLEOTIDE SEQUENCE [MRNA] (ISOFORM LONG)</scope>
</reference>
<reference key="2">
    <citation type="journal article" date="1998" name="Am. J. Vet. Res.">
        <title>Cloning of equine interleukin-1 alpha and equine interleukin-1 beta and determination of their full-length cDNA sequences.</title>
        <authorList>
            <person name="Howard R.D."/>
            <person name="McIlwraith C.W."/>
            <person name="Trotter G.W."/>
            <person name="Nyborg J.K."/>
        </authorList>
    </citation>
    <scope>NUCLEOTIDE SEQUENCE [MRNA] (ISOFORM LONG)</scope>
</reference>
<reference key="3">
    <citation type="journal article" date="1996" name="Gene">
        <title>Identification of an alternatively spliced transcript of equine interleukin-1 beta.</title>
        <authorList>
            <person name="Kato H."/>
            <person name="Youn H.Y."/>
            <person name="Ohashi T."/>
            <person name="Watari T."/>
            <person name="Goitsuka R."/>
            <person name="Tsujimoto H."/>
            <person name="Hasegawa A."/>
        </authorList>
    </citation>
    <scope>NUCLEOTIDE SEQUENCE [MRNA] (ISOFORM SHORT)</scope>
</reference>
<comment type="function">
    <text evidence="2">Potent pro-inflammatory cytokine. Initially discovered as the major endogenous pyrogen, induces prostaglandin synthesis, neutrophil influx and activation, T-cell activation and cytokine production, B-cell activation and antibody production, and fibroblast proliferation and collagen production. Promotes Th17 differentiation of T-cells. Synergizes with IL12/interleukin-12 to induce IFNG synthesis from T-helper 1 (Th1) cells. Plays a role in angiogenesis by inducing VEGF production synergistically with TNF and IL6. Involved in transduction of inflammation downstream of pyroptosis: its mature form is specifically released in the extracellular milieu by passing through the gasdermin-D (GSDMD) pore.</text>
</comment>
<comment type="subunit">
    <text evidence="2">Monomer. In its precursor form, weakly interacts with full-length MEFV; the mature cytokine does not interact at all. Interacts with integrins ITGAV:ITGBV and ITGA5:ITGB1; integrin-binding is required for IL1B signaling. Interacts with cargo receptor TMED10; the interaction is direct and is required for the secretion of IL1B mature form. Interacts with HSP90AB1; the interaction facilitates cargo translocation into the ERGIC. Interacts with HSP90B1; the interaction facilitates cargo translocation into the ERGIC.</text>
</comment>
<comment type="subcellular location">
    <subcellularLocation>
        <location evidence="2">Cytoplasm</location>
        <location evidence="2">Cytosol</location>
    </subcellularLocation>
    <subcellularLocation>
        <location evidence="2">Secreted</location>
    </subcellularLocation>
    <subcellularLocation>
        <location evidence="2">Lysosome</location>
    </subcellularLocation>
    <subcellularLocation>
        <location evidence="3">Secreted</location>
        <location evidence="3">Extracellular exosome</location>
    </subcellularLocation>
    <text evidence="2">The precursor is cytosolic. In response to inflammasome-activating signals, such as ATP for NLRP3 inflammasome or bacterial flagellin for NLRC4 inflammasome, cleaved and secreted. Mature form is secreted and released in the extracellular milieu by passing through the gasdermin-D (GSDMD) pore. In contrast, the precursor form is not released, due to the presence of an acidic region that is proteolytically removed by CASP1 during maturation. The secretion is dependent on protein unfolding and facilitated by the cargo receptor TMED10.</text>
</comment>
<comment type="alternative products">
    <event type="alternative splicing"/>
    <isoform>
        <id>Q28386-1</id>
        <name>Long</name>
        <sequence type="displayed"/>
    </isoform>
    <isoform>
        <id>Q28386-2</id>
        <name>Short</name>
        <sequence type="described" ref="VSP_002648"/>
    </isoform>
</comment>
<comment type="miscellaneous">
    <text evidence="1">IL1B production occurs in 2 steps, each being controlled by different stimuli. First, inflammatory signals, such as LPS, stimulate the synthesis and promote the accumulation of cytosolic stores of pro-IL1B (priming). Then additional signals are required for inflammasome assembly, leading to CASP1 activation, pro-IL1B processing and eventually secretion of the active cytokine. IL1B processing and secretion are temporarily associated.</text>
</comment>
<comment type="similarity">
    <text evidence="5">Belongs to the IL-1 family.</text>
</comment>
<sequence>MAAVPDTSDMMTYCSGNENDLFFEEDGPKQMKGSFQDLDLSSMGDGGIQLQFSHHLYNKTFKHAMSIIVAVEKLKKIPVPCSQAFQDDDLRSLFSVIFEEEPIICDNWDEGYVCDAAMHSVNCRLRDIYHKSLVLSGACELQAVHLNGENTNQQVVFCMSFVQGEEETDKIPVALGLKEKNLYLSCGMKDGKPTLQLETVDPNTYPKRKMEKRFVFNKMEIKGNVEFESAMYPNWYISTSQAEKSPVFLGNTRGGRDITDFIMEITSA</sequence>
<organism>
    <name type="scientific">Equus caballus</name>
    <name type="common">Horse</name>
    <dbReference type="NCBI Taxonomy" id="9796"/>
    <lineage>
        <taxon>Eukaryota</taxon>
        <taxon>Metazoa</taxon>
        <taxon>Chordata</taxon>
        <taxon>Craniata</taxon>
        <taxon>Vertebrata</taxon>
        <taxon>Euteleostomi</taxon>
        <taxon>Mammalia</taxon>
        <taxon>Eutheria</taxon>
        <taxon>Laurasiatheria</taxon>
        <taxon>Perissodactyla</taxon>
        <taxon>Equidae</taxon>
        <taxon>Equus</taxon>
    </lineage>
</organism>
<gene>
    <name type="primary">IL1B</name>
</gene>
<evidence type="ECO:0000250" key="1"/>
<evidence type="ECO:0000250" key="2">
    <source>
        <dbReference type="UniProtKB" id="P01584"/>
    </source>
</evidence>
<evidence type="ECO:0000250" key="3">
    <source>
        <dbReference type="UniProtKB" id="P10749"/>
    </source>
</evidence>
<evidence type="ECO:0000303" key="4">
    <source>
    </source>
</evidence>
<evidence type="ECO:0000305" key="5"/>